<gene>
    <name type="primary">CGA</name>
</gene>
<name>GLHA_OSPRU</name>
<comment type="function">
    <text evidence="2">Shared alpha chain of the active heterodimeric glycoprotein hormones thyrotropin/thyroid stimulating hormone/TSH, lutropin/luteinizing hormone/LH and follitropin/follicle stimulating hormone/FSH. These hormones bind specific receptors on target cells that in turn activate downstream signaling pathways.</text>
</comment>
<comment type="subunit">
    <text evidence="2">Heterodimer. The active hormones thyrotropin, lutropin and follitropin are heterodimers composed of CGA, a common alpha chain described here and a unique beta chain which confers their biological specificity to the hormones: TSHB for thyrotropin, LHB for lutropin and FSHB for follitropin.</text>
</comment>
<comment type="subcellular location">
    <subcellularLocation>
        <location evidence="2">Secreted</location>
    </subcellularLocation>
</comment>
<comment type="similarity">
    <text evidence="3">Belongs to the glycoprotein hormones subunit alpha family.</text>
</comment>
<sequence>MDYYRKYAAVILATLSVFLHILHSFPDGEFIMQGCPECKLKENKYFSKLGAPIYQCMGCCFSRAYPTPARSKKTMLVPKNITSEATCCVAKAFTKATVMGNAKVENHTECHCSTCYYHKS</sequence>
<dbReference type="EMBL" id="AF017449">
    <property type="protein sequence ID" value="AAC96020.1"/>
    <property type="molecule type" value="mRNA"/>
</dbReference>
<dbReference type="SMR" id="P68267"/>
<dbReference type="GlyCosmos" id="P68267">
    <property type="glycosylation" value="2 sites, No reported glycans"/>
</dbReference>
<dbReference type="GO" id="GO:0005615">
    <property type="term" value="C:extracellular space"/>
    <property type="evidence" value="ECO:0000250"/>
    <property type="project" value="UniProtKB"/>
</dbReference>
<dbReference type="GO" id="GO:0016914">
    <property type="term" value="C:follicle-stimulating hormone complex"/>
    <property type="evidence" value="ECO:0000250"/>
    <property type="project" value="UniProtKB"/>
</dbReference>
<dbReference type="GO" id="GO:0016913">
    <property type="term" value="F:follicle-stimulating hormone activity"/>
    <property type="evidence" value="ECO:0000250"/>
    <property type="project" value="UniProtKB"/>
</dbReference>
<dbReference type="GO" id="GO:0007186">
    <property type="term" value="P:G protein-coupled receptor signaling pathway"/>
    <property type="evidence" value="ECO:0000250"/>
    <property type="project" value="UniProtKB"/>
</dbReference>
<dbReference type="GO" id="GO:0010893">
    <property type="term" value="P:positive regulation of steroid biosynthetic process"/>
    <property type="evidence" value="ECO:0000250"/>
    <property type="project" value="UniProtKB"/>
</dbReference>
<dbReference type="GO" id="GO:0010469">
    <property type="term" value="P:regulation of signaling receptor activity"/>
    <property type="evidence" value="ECO:0000250"/>
    <property type="project" value="UniProtKB"/>
</dbReference>
<dbReference type="GO" id="GO:0006590">
    <property type="term" value="P:thyroid hormone generation"/>
    <property type="evidence" value="ECO:0007669"/>
    <property type="project" value="TreeGrafter"/>
</dbReference>
<dbReference type="FunFam" id="2.10.90.10:FF:000011">
    <property type="entry name" value="Glycoprotein hormones alpha chain"/>
    <property type="match status" value="1"/>
</dbReference>
<dbReference type="Gene3D" id="2.10.90.10">
    <property type="entry name" value="Cystine-knot cytokines"/>
    <property type="match status" value="1"/>
</dbReference>
<dbReference type="InterPro" id="IPR029034">
    <property type="entry name" value="Cystine-knot_cytokine"/>
</dbReference>
<dbReference type="InterPro" id="IPR000476">
    <property type="entry name" value="Glyco_hormone"/>
</dbReference>
<dbReference type="PANTHER" id="PTHR11509">
    <property type="entry name" value="GLYCOPROTEIN HORMONE ALPHA CHAIN"/>
    <property type="match status" value="1"/>
</dbReference>
<dbReference type="PANTHER" id="PTHR11509:SF0">
    <property type="entry name" value="GLYCOPROTEIN HORMONES ALPHA CHAIN"/>
    <property type="match status" value="1"/>
</dbReference>
<dbReference type="Pfam" id="PF00236">
    <property type="entry name" value="Hormone_6"/>
    <property type="match status" value="1"/>
</dbReference>
<dbReference type="PRINTS" id="PR00274">
    <property type="entry name" value="GLYCOHORMONE"/>
</dbReference>
<dbReference type="SMART" id="SM00067">
    <property type="entry name" value="GHA"/>
    <property type="match status" value="1"/>
</dbReference>
<dbReference type="SUPFAM" id="SSF57501">
    <property type="entry name" value="Cystine-knot cytokines"/>
    <property type="match status" value="1"/>
</dbReference>
<dbReference type="PROSITE" id="PS00779">
    <property type="entry name" value="GLYCO_HORMONE_ALPHA_1"/>
    <property type="match status" value="1"/>
</dbReference>
<dbReference type="PROSITE" id="PS00780">
    <property type="entry name" value="GLYCO_HORMONE_ALPHA_2"/>
    <property type="match status" value="1"/>
</dbReference>
<dbReference type="PROSITE" id="PS50277">
    <property type="entry name" value="GLYCO_HORMONE_ALPHA_3"/>
    <property type="match status" value="1"/>
</dbReference>
<organism>
    <name type="scientific">Osphranter rufus</name>
    <name type="common">Red kangaroo</name>
    <name type="synonym">Macropus rufus</name>
    <dbReference type="NCBI Taxonomy" id="9321"/>
    <lineage>
        <taxon>Eukaryota</taxon>
        <taxon>Metazoa</taxon>
        <taxon>Chordata</taxon>
        <taxon>Craniata</taxon>
        <taxon>Vertebrata</taxon>
        <taxon>Euteleostomi</taxon>
        <taxon>Mammalia</taxon>
        <taxon>Metatheria</taxon>
        <taxon>Diprotodontia</taxon>
        <taxon>Macropodidae</taxon>
        <taxon>Osphranter</taxon>
    </lineage>
</organism>
<protein>
    <recommendedName>
        <fullName>Glycoprotein hormones alpha chain</fullName>
    </recommendedName>
    <alternativeName>
        <fullName>Anterior pituitary glycoprotein hormones common subunit alpha</fullName>
    </alternativeName>
    <alternativeName>
        <fullName>Follicle-stimulating hormone alpha chain</fullName>
        <shortName>FSH-alpha</shortName>
    </alternativeName>
    <alternativeName>
        <fullName>Follitropin alpha chain</fullName>
    </alternativeName>
    <alternativeName>
        <fullName>Luteinizing hormone alpha chain</fullName>
        <shortName>LSH-alpha</shortName>
    </alternativeName>
    <alternativeName>
        <fullName>Lutropin alpha chain</fullName>
    </alternativeName>
    <alternativeName>
        <fullName>Thyroid-stimulating hormone alpha chain</fullName>
        <shortName>TSH-alpha</shortName>
    </alternativeName>
    <alternativeName>
        <fullName>Thyrotropin alpha chain</fullName>
    </alternativeName>
</protein>
<keyword id="KW-1015">Disulfide bond</keyword>
<keyword id="KW-0325">Glycoprotein</keyword>
<keyword id="KW-0372">Hormone</keyword>
<keyword id="KW-0964">Secreted</keyword>
<keyword id="KW-0732">Signal</keyword>
<proteinExistence type="evidence at transcript level"/>
<feature type="signal peptide" evidence="1">
    <location>
        <begin position="1"/>
        <end position="24"/>
    </location>
</feature>
<feature type="chain" id="PRO_0000011643" description="Glycoprotein hormones alpha chain">
    <location>
        <begin position="25"/>
        <end position="120"/>
    </location>
</feature>
<feature type="glycosylation site" description="N-linked (GlcNAc...) asparagine" evidence="2">
    <location>
        <position position="80"/>
    </location>
</feature>
<feature type="glycosylation site" description="N-linked (GlcNAc...) asparagine" evidence="2">
    <location>
        <position position="106"/>
    </location>
</feature>
<feature type="disulfide bond" evidence="2">
    <location>
        <begin position="35"/>
        <end position="59"/>
    </location>
</feature>
<feature type="disulfide bond" evidence="2">
    <location>
        <begin position="38"/>
        <end position="88"/>
    </location>
</feature>
<feature type="disulfide bond" evidence="2">
    <location>
        <begin position="56"/>
        <end position="110"/>
    </location>
</feature>
<feature type="disulfide bond" evidence="2">
    <location>
        <begin position="60"/>
        <end position="112"/>
    </location>
</feature>
<feature type="disulfide bond" evidence="2">
    <location>
        <begin position="87"/>
        <end position="115"/>
    </location>
</feature>
<accession>P68267</accession>
<accession>O46687</accession>
<accession>O77752</accession>
<evidence type="ECO:0000250" key="1"/>
<evidence type="ECO:0000250" key="2">
    <source>
        <dbReference type="UniProtKB" id="P01215"/>
    </source>
</evidence>
<evidence type="ECO:0000305" key="3"/>
<reference key="1">
    <citation type="journal article" date="1998" name="Mamm. Genome">
        <title>cDNA cloning of luteinizing hormone subunits from brushtail possum and red kangaroo.</title>
        <authorList>
            <person name="Harrison G.A."/>
            <person name="Deane E.M."/>
            <person name="Cooper D.W."/>
        </authorList>
    </citation>
    <scope>NUCLEOTIDE SEQUENCE [MRNA]</scope>
    <source>
        <tissue>Pituitary</tissue>
    </source>
</reference>